<reference key="1">
    <citation type="journal article" date="2002" name="Nucleic Acids Res.">
        <title>Genome sequence of Shigella flexneri 2a: insights into pathogenicity through comparison with genomes of Escherichia coli K12 and O157.</title>
        <authorList>
            <person name="Jin Q."/>
            <person name="Yuan Z."/>
            <person name="Xu J."/>
            <person name="Wang Y."/>
            <person name="Shen Y."/>
            <person name="Lu W."/>
            <person name="Wang J."/>
            <person name="Liu H."/>
            <person name="Yang J."/>
            <person name="Yang F."/>
            <person name="Zhang X."/>
            <person name="Zhang J."/>
            <person name="Yang G."/>
            <person name="Wu H."/>
            <person name="Qu D."/>
            <person name="Dong J."/>
            <person name="Sun L."/>
            <person name="Xue Y."/>
            <person name="Zhao A."/>
            <person name="Gao Y."/>
            <person name="Zhu J."/>
            <person name="Kan B."/>
            <person name="Ding K."/>
            <person name="Chen S."/>
            <person name="Cheng H."/>
            <person name="Yao Z."/>
            <person name="He B."/>
            <person name="Chen R."/>
            <person name="Ma D."/>
            <person name="Qiang B."/>
            <person name="Wen Y."/>
            <person name="Hou Y."/>
            <person name="Yu J."/>
        </authorList>
    </citation>
    <scope>NUCLEOTIDE SEQUENCE [LARGE SCALE GENOMIC DNA]</scope>
    <source>
        <strain>301 / Serotype 2a</strain>
    </source>
</reference>
<reference key="2">
    <citation type="journal article" date="2003" name="Infect. Immun.">
        <title>Complete genome sequence and comparative genomics of Shigella flexneri serotype 2a strain 2457T.</title>
        <authorList>
            <person name="Wei J."/>
            <person name="Goldberg M.B."/>
            <person name="Burland V."/>
            <person name="Venkatesan M.M."/>
            <person name="Deng W."/>
            <person name="Fournier G."/>
            <person name="Mayhew G.F."/>
            <person name="Plunkett G. III"/>
            <person name="Rose D.J."/>
            <person name="Darling A."/>
            <person name="Mau B."/>
            <person name="Perna N.T."/>
            <person name="Payne S.M."/>
            <person name="Runyen-Janecky L.J."/>
            <person name="Zhou S."/>
            <person name="Schwartz D.C."/>
            <person name="Blattner F.R."/>
        </authorList>
    </citation>
    <scope>NUCLEOTIDE SEQUENCE [LARGE SCALE GENOMIC DNA]</scope>
    <source>
        <strain>ATCC 700930 / 2457T / Serotype 2a</strain>
    </source>
</reference>
<dbReference type="EC" id="3.6.4.-" evidence="1"/>
<dbReference type="EMBL" id="AE005674">
    <property type="protein sequence ID" value="AAN43427.1"/>
    <property type="molecule type" value="Genomic_DNA"/>
</dbReference>
<dbReference type="EMBL" id="AE014073">
    <property type="protein sequence ID" value="AAP17251.1"/>
    <property type="molecule type" value="Genomic_DNA"/>
</dbReference>
<dbReference type="RefSeq" id="NP_707720.1">
    <property type="nucleotide sequence ID" value="NC_004337.2"/>
</dbReference>
<dbReference type="RefSeq" id="WP_000568525.1">
    <property type="nucleotide sequence ID" value="NZ_WPGW01000041.1"/>
</dbReference>
<dbReference type="SMR" id="Q83KR5"/>
<dbReference type="STRING" id="198214.SF1870"/>
<dbReference type="PaxDb" id="198214-SF1870"/>
<dbReference type="GeneID" id="1025087"/>
<dbReference type="KEGG" id="sfl:SF1870"/>
<dbReference type="KEGG" id="sfx:S1936"/>
<dbReference type="PATRIC" id="fig|198214.7.peg.2228"/>
<dbReference type="HOGENOM" id="CLU_055599_1_0_6"/>
<dbReference type="Proteomes" id="UP000001006">
    <property type="component" value="Chromosome"/>
</dbReference>
<dbReference type="Proteomes" id="UP000002673">
    <property type="component" value="Chromosome"/>
</dbReference>
<dbReference type="GO" id="GO:0005737">
    <property type="term" value="C:cytoplasm"/>
    <property type="evidence" value="ECO:0007669"/>
    <property type="project" value="UniProtKB-SubCell"/>
</dbReference>
<dbReference type="GO" id="GO:0048476">
    <property type="term" value="C:Holliday junction resolvase complex"/>
    <property type="evidence" value="ECO:0007669"/>
    <property type="project" value="UniProtKB-UniRule"/>
</dbReference>
<dbReference type="GO" id="GO:0005524">
    <property type="term" value="F:ATP binding"/>
    <property type="evidence" value="ECO:0007669"/>
    <property type="project" value="UniProtKB-UniRule"/>
</dbReference>
<dbReference type="GO" id="GO:0016887">
    <property type="term" value="F:ATP hydrolysis activity"/>
    <property type="evidence" value="ECO:0007669"/>
    <property type="project" value="InterPro"/>
</dbReference>
<dbReference type="GO" id="GO:0000400">
    <property type="term" value="F:four-way junction DNA binding"/>
    <property type="evidence" value="ECO:0007669"/>
    <property type="project" value="UniProtKB-UniRule"/>
</dbReference>
<dbReference type="GO" id="GO:0009378">
    <property type="term" value="F:four-way junction helicase activity"/>
    <property type="evidence" value="ECO:0007669"/>
    <property type="project" value="InterPro"/>
</dbReference>
<dbReference type="GO" id="GO:0006310">
    <property type="term" value="P:DNA recombination"/>
    <property type="evidence" value="ECO:0007669"/>
    <property type="project" value="UniProtKB-UniRule"/>
</dbReference>
<dbReference type="GO" id="GO:0006281">
    <property type="term" value="P:DNA repair"/>
    <property type="evidence" value="ECO:0007669"/>
    <property type="project" value="UniProtKB-UniRule"/>
</dbReference>
<dbReference type="CDD" id="cd00009">
    <property type="entry name" value="AAA"/>
    <property type="match status" value="1"/>
</dbReference>
<dbReference type="FunFam" id="1.10.10.10:FF:000086">
    <property type="entry name" value="Holliday junction ATP-dependent DNA helicase RuvB"/>
    <property type="match status" value="1"/>
</dbReference>
<dbReference type="FunFam" id="1.10.8.60:FF:000023">
    <property type="entry name" value="Holliday junction ATP-dependent DNA helicase RuvB"/>
    <property type="match status" value="1"/>
</dbReference>
<dbReference type="FunFam" id="3.40.50.300:FF:000073">
    <property type="entry name" value="Holliday junction ATP-dependent DNA helicase RuvB"/>
    <property type="match status" value="1"/>
</dbReference>
<dbReference type="Gene3D" id="1.10.8.60">
    <property type="match status" value="1"/>
</dbReference>
<dbReference type="Gene3D" id="3.40.50.300">
    <property type="entry name" value="P-loop containing nucleotide triphosphate hydrolases"/>
    <property type="match status" value="1"/>
</dbReference>
<dbReference type="Gene3D" id="1.10.10.10">
    <property type="entry name" value="Winged helix-like DNA-binding domain superfamily/Winged helix DNA-binding domain"/>
    <property type="match status" value="1"/>
</dbReference>
<dbReference type="HAMAP" id="MF_00016">
    <property type="entry name" value="DNA_HJ_migration_RuvB"/>
    <property type="match status" value="1"/>
</dbReference>
<dbReference type="InterPro" id="IPR003593">
    <property type="entry name" value="AAA+_ATPase"/>
</dbReference>
<dbReference type="InterPro" id="IPR041445">
    <property type="entry name" value="AAA_lid_4"/>
</dbReference>
<dbReference type="InterPro" id="IPR004605">
    <property type="entry name" value="DNA_helicase_Holl-junc_RuvB"/>
</dbReference>
<dbReference type="InterPro" id="IPR027417">
    <property type="entry name" value="P-loop_NTPase"/>
</dbReference>
<dbReference type="InterPro" id="IPR008824">
    <property type="entry name" value="RuvB-like_N"/>
</dbReference>
<dbReference type="InterPro" id="IPR008823">
    <property type="entry name" value="RuvB_C"/>
</dbReference>
<dbReference type="InterPro" id="IPR036388">
    <property type="entry name" value="WH-like_DNA-bd_sf"/>
</dbReference>
<dbReference type="InterPro" id="IPR036390">
    <property type="entry name" value="WH_DNA-bd_sf"/>
</dbReference>
<dbReference type="NCBIfam" id="NF000868">
    <property type="entry name" value="PRK00080.1"/>
    <property type="match status" value="1"/>
</dbReference>
<dbReference type="NCBIfam" id="TIGR00635">
    <property type="entry name" value="ruvB"/>
    <property type="match status" value="1"/>
</dbReference>
<dbReference type="PANTHER" id="PTHR42848">
    <property type="match status" value="1"/>
</dbReference>
<dbReference type="PANTHER" id="PTHR42848:SF1">
    <property type="entry name" value="HOLLIDAY JUNCTION BRANCH MIGRATION COMPLEX SUBUNIT RUVB"/>
    <property type="match status" value="1"/>
</dbReference>
<dbReference type="Pfam" id="PF17864">
    <property type="entry name" value="AAA_lid_4"/>
    <property type="match status" value="1"/>
</dbReference>
<dbReference type="Pfam" id="PF05491">
    <property type="entry name" value="RuvB_C"/>
    <property type="match status" value="1"/>
</dbReference>
<dbReference type="Pfam" id="PF05496">
    <property type="entry name" value="RuvB_N"/>
    <property type="match status" value="1"/>
</dbReference>
<dbReference type="SMART" id="SM00382">
    <property type="entry name" value="AAA"/>
    <property type="match status" value="1"/>
</dbReference>
<dbReference type="SUPFAM" id="SSF52540">
    <property type="entry name" value="P-loop containing nucleoside triphosphate hydrolases"/>
    <property type="match status" value="1"/>
</dbReference>
<dbReference type="SUPFAM" id="SSF46785">
    <property type="entry name" value="Winged helix' DNA-binding domain"/>
    <property type="match status" value="1"/>
</dbReference>
<proteinExistence type="inferred from homology"/>
<gene>
    <name evidence="1" type="primary">ruvB</name>
    <name type="ordered locus">SF1870</name>
    <name type="ordered locus">S1936</name>
</gene>
<sequence length="336" mass="37189">MIEADRLISAGTTLPEDVADRAIRPKLLEEYVGQPQVRSQMEIFIKAAKLRGDALDHLLIFGPPGLGKTTLANIVANEMGVNLRTTSGPVLEKAGDLAAMLTNLEPHDVLFIDEIHRLSPVVEEVLYPAMEDYQLDIMIGEGPAARSIKIDLPPFTLIGATTRAGSLTSPLRDRFGIVQRLEFYQVPDLQYIVSRSARFMGLEMSDDGAQEVARRARGTPRIANRLLRRVRDFAEVKHDGTISADIAAQALDMLNVDAEGFDYMDRKLLLAVIDKFFGGPVGLDNLAAAIGEERETIEDVLEPYLIQQGFLQRTPRGRMATTRAWNHFGITPPEMP</sequence>
<feature type="chain" id="PRO_0000165593" description="Holliday junction branch migration complex subunit RuvB">
    <location>
        <begin position="1"/>
        <end position="336"/>
    </location>
</feature>
<feature type="region of interest" description="Large ATPase domain (RuvB-L)" evidence="1">
    <location>
        <begin position="4"/>
        <end position="184"/>
    </location>
</feature>
<feature type="region of interest" description="Small ATPAse domain (RuvB-S)" evidence="1">
    <location>
        <begin position="185"/>
        <end position="255"/>
    </location>
</feature>
<feature type="region of interest" description="Head domain (RuvB-H)" evidence="1">
    <location>
        <begin position="258"/>
        <end position="336"/>
    </location>
</feature>
<feature type="binding site" evidence="1">
    <location>
        <position position="23"/>
    </location>
    <ligand>
        <name>ATP</name>
        <dbReference type="ChEBI" id="CHEBI:30616"/>
    </ligand>
</feature>
<feature type="binding site" evidence="1">
    <location>
        <position position="24"/>
    </location>
    <ligand>
        <name>ATP</name>
        <dbReference type="ChEBI" id="CHEBI:30616"/>
    </ligand>
</feature>
<feature type="binding site" evidence="1">
    <location>
        <position position="65"/>
    </location>
    <ligand>
        <name>ATP</name>
        <dbReference type="ChEBI" id="CHEBI:30616"/>
    </ligand>
</feature>
<feature type="binding site" evidence="1">
    <location>
        <position position="68"/>
    </location>
    <ligand>
        <name>ATP</name>
        <dbReference type="ChEBI" id="CHEBI:30616"/>
    </ligand>
</feature>
<feature type="binding site" evidence="1">
    <location>
        <position position="69"/>
    </location>
    <ligand>
        <name>ATP</name>
        <dbReference type="ChEBI" id="CHEBI:30616"/>
    </ligand>
</feature>
<feature type="binding site" evidence="1">
    <location>
        <position position="69"/>
    </location>
    <ligand>
        <name>Mg(2+)</name>
        <dbReference type="ChEBI" id="CHEBI:18420"/>
    </ligand>
</feature>
<feature type="binding site" evidence="1">
    <location>
        <position position="70"/>
    </location>
    <ligand>
        <name>ATP</name>
        <dbReference type="ChEBI" id="CHEBI:30616"/>
    </ligand>
</feature>
<feature type="binding site" evidence="1">
    <location>
        <begin position="131"/>
        <end position="133"/>
    </location>
    <ligand>
        <name>ATP</name>
        <dbReference type="ChEBI" id="CHEBI:30616"/>
    </ligand>
</feature>
<feature type="binding site" evidence="1">
    <location>
        <position position="174"/>
    </location>
    <ligand>
        <name>ATP</name>
        <dbReference type="ChEBI" id="CHEBI:30616"/>
    </ligand>
</feature>
<feature type="binding site" evidence="1">
    <location>
        <position position="184"/>
    </location>
    <ligand>
        <name>ATP</name>
        <dbReference type="ChEBI" id="CHEBI:30616"/>
    </ligand>
</feature>
<feature type="binding site" evidence="1">
    <location>
        <position position="221"/>
    </location>
    <ligand>
        <name>ATP</name>
        <dbReference type="ChEBI" id="CHEBI:30616"/>
    </ligand>
</feature>
<feature type="binding site" evidence="1">
    <location>
        <position position="294"/>
    </location>
    <ligand>
        <name>DNA</name>
        <dbReference type="ChEBI" id="CHEBI:16991"/>
    </ligand>
</feature>
<feature type="binding site" evidence="1">
    <location>
        <position position="313"/>
    </location>
    <ligand>
        <name>DNA</name>
        <dbReference type="ChEBI" id="CHEBI:16991"/>
    </ligand>
</feature>
<feature type="binding site" evidence="1">
    <location>
        <position position="318"/>
    </location>
    <ligand>
        <name>DNA</name>
        <dbReference type="ChEBI" id="CHEBI:16991"/>
    </ligand>
</feature>
<evidence type="ECO:0000255" key="1">
    <source>
        <dbReference type="HAMAP-Rule" id="MF_00016"/>
    </source>
</evidence>
<organism>
    <name type="scientific">Shigella flexneri</name>
    <dbReference type="NCBI Taxonomy" id="623"/>
    <lineage>
        <taxon>Bacteria</taxon>
        <taxon>Pseudomonadati</taxon>
        <taxon>Pseudomonadota</taxon>
        <taxon>Gammaproteobacteria</taxon>
        <taxon>Enterobacterales</taxon>
        <taxon>Enterobacteriaceae</taxon>
        <taxon>Shigella</taxon>
    </lineage>
</organism>
<comment type="function">
    <text evidence="1">The RuvA-RuvB-RuvC complex processes Holliday junction (HJ) DNA during genetic recombination and DNA repair, while the RuvA-RuvB complex plays an important role in the rescue of blocked DNA replication forks via replication fork reversal (RFR). RuvA specifically binds to HJ cruciform DNA, conferring on it an open structure. The RuvB hexamer acts as an ATP-dependent pump, pulling dsDNA into and through the RuvAB complex. RuvB forms 2 homohexamers on either side of HJ DNA bound by 1 or 2 RuvA tetramers; 4 subunits per hexamer contact DNA at a time. Coordinated motions by a converter formed by DNA-disengaged RuvB subunits stimulates ATP hydrolysis and nucleotide exchange. Immobilization of the converter enables RuvB to convert the ATP-contained energy into a lever motion, pulling 2 nucleotides of DNA out of the RuvA tetramer per ATP hydrolyzed, thus driving DNA branch migration. The RuvB motors rotate together with the DNA substrate, which together with the progressing nucleotide cycle form the mechanistic basis for DNA recombination by continuous HJ branch migration. Branch migration allows RuvC to scan DNA until it finds its consensus sequence, where it cleaves and resolves cruciform DNA.</text>
</comment>
<comment type="catalytic activity">
    <reaction evidence="1">
        <text>ATP + H2O = ADP + phosphate + H(+)</text>
        <dbReference type="Rhea" id="RHEA:13065"/>
        <dbReference type="ChEBI" id="CHEBI:15377"/>
        <dbReference type="ChEBI" id="CHEBI:15378"/>
        <dbReference type="ChEBI" id="CHEBI:30616"/>
        <dbReference type="ChEBI" id="CHEBI:43474"/>
        <dbReference type="ChEBI" id="CHEBI:456216"/>
    </reaction>
</comment>
<comment type="subunit">
    <text evidence="1">Homohexamer. Forms an RuvA(8)-RuvB(12)-Holliday junction (HJ) complex. HJ DNA is sandwiched between 2 RuvA tetramers; dsDNA enters through RuvA and exits via RuvB. An RuvB hexamer assembles on each DNA strand where it exits the tetramer. Each RuvB hexamer is contacted by two RuvA subunits (via domain III) on 2 adjacent RuvB subunits; this complex drives branch migration. In the full resolvosome a probable DNA-RuvA(4)-RuvB(12)-RuvC(2) complex forms which resolves the HJ.</text>
</comment>
<comment type="subcellular location">
    <subcellularLocation>
        <location evidence="1">Cytoplasm</location>
    </subcellularLocation>
</comment>
<comment type="domain">
    <text evidence="1">Has 3 domains, the large (RuvB-L) and small ATPase (RuvB-S) domains and the C-terminal head (RuvB-H) domain. The head domain binds DNA, while the ATPase domains jointly bind ATP, ADP or are empty depending on the state of the subunit in the translocation cycle. During a single DNA translocation step the structure of each domain remains the same, but their relative positions change.</text>
</comment>
<comment type="similarity">
    <text evidence="1">Belongs to the RuvB family.</text>
</comment>
<keyword id="KW-0067">ATP-binding</keyword>
<keyword id="KW-0963">Cytoplasm</keyword>
<keyword id="KW-0227">DNA damage</keyword>
<keyword id="KW-0233">DNA recombination</keyword>
<keyword id="KW-0234">DNA repair</keyword>
<keyword id="KW-0238">DNA-binding</keyword>
<keyword id="KW-0378">Hydrolase</keyword>
<keyword id="KW-0547">Nucleotide-binding</keyword>
<keyword id="KW-1185">Reference proteome</keyword>
<name>RUVB_SHIFL</name>
<accession>Q83KR5</accession>
<protein>
    <recommendedName>
        <fullName evidence="1">Holliday junction branch migration complex subunit RuvB</fullName>
        <ecNumber evidence="1">3.6.4.-</ecNumber>
    </recommendedName>
</protein>